<name>MIAA_ECOSM</name>
<feature type="chain" id="PRO_1000118528" description="tRNA dimethylallyltransferase">
    <location>
        <begin position="1"/>
        <end position="316"/>
    </location>
</feature>
<feature type="region of interest" description="Interaction with substrate tRNA" evidence="1">
    <location>
        <begin position="42"/>
        <end position="45"/>
    </location>
</feature>
<feature type="region of interest" description="Interaction with substrate tRNA" evidence="1">
    <location>
        <begin position="166"/>
        <end position="170"/>
    </location>
</feature>
<feature type="region of interest" description="Interaction with substrate tRNA" evidence="1">
    <location>
        <begin position="247"/>
        <end position="252"/>
    </location>
</feature>
<feature type="region of interest" description="Interaction with substrate tRNA" evidence="1">
    <location>
        <begin position="280"/>
        <end position="287"/>
    </location>
</feature>
<feature type="binding site" evidence="1">
    <location>
        <begin position="17"/>
        <end position="24"/>
    </location>
    <ligand>
        <name>ATP</name>
        <dbReference type="ChEBI" id="CHEBI:30616"/>
    </ligand>
</feature>
<feature type="binding site" evidence="1">
    <location>
        <begin position="19"/>
        <end position="24"/>
    </location>
    <ligand>
        <name>substrate</name>
    </ligand>
</feature>
<feature type="site" description="Interaction with substrate tRNA" evidence="1">
    <location>
        <position position="108"/>
    </location>
</feature>
<feature type="site" description="Interaction with substrate tRNA" evidence="1">
    <location>
        <position position="130"/>
    </location>
</feature>
<sequence>MSDISKASLPKAIFLMGPTASGKTALAIELRKILPVELISVDSALIYKGMDIGTAKPNAEELLAAPHRLLDIRDPSQAYSAADFRRDALAEMADITAAGRIPLLVGGTMLYFKALLEGLSPLPSADPEVRARIEQQAAEQGWESLHRQLQEIDPVAAARIHPNDPQRLSRALEVFFISGKTLTELTQTSGDALPYQVHQFAIAPASRELLHQRIEQRFHQMLASGFEAEVRALFARGDLHTDLPSIRCVGYRQMWSYLEGEISYDEMVYRGVCATRQLAKRQITWLRGWEGVHWLDSEKPEQARDEVLQVVGAIAG</sequence>
<dbReference type="EC" id="2.5.1.75" evidence="1"/>
<dbReference type="EMBL" id="CP000970">
    <property type="protein sequence ID" value="ACB17798.1"/>
    <property type="molecule type" value="Genomic_DNA"/>
</dbReference>
<dbReference type="RefSeq" id="WP_001280339.1">
    <property type="nucleotide sequence ID" value="NC_010498.1"/>
</dbReference>
<dbReference type="SMR" id="B1LQJ1"/>
<dbReference type="GeneID" id="75169691"/>
<dbReference type="KEGG" id="ecm:EcSMS35_4642"/>
<dbReference type="HOGENOM" id="CLU_032616_0_0_6"/>
<dbReference type="Proteomes" id="UP000007011">
    <property type="component" value="Chromosome"/>
</dbReference>
<dbReference type="GO" id="GO:0005524">
    <property type="term" value="F:ATP binding"/>
    <property type="evidence" value="ECO:0007669"/>
    <property type="project" value="UniProtKB-UniRule"/>
</dbReference>
<dbReference type="GO" id="GO:0052381">
    <property type="term" value="F:tRNA dimethylallyltransferase activity"/>
    <property type="evidence" value="ECO:0007669"/>
    <property type="project" value="UniProtKB-UniRule"/>
</dbReference>
<dbReference type="GO" id="GO:0006400">
    <property type="term" value="P:tRNA modification"/>
    <property type="evidence" value="ECO:0007669"/>
    <property type="project" value="TreeGrafter"/>
</dbReference>
<dbReference type="FunFam" id="1.10.20.140:FF:000001">
    <property type="entry name" value="tRNA dimethylallyltransferase"/>
    <property type="match status" value="1"/>
</dbReference>
<dbReference type="FunFam" id="1.10.287.890:FF:000001">
    <property type="entry name" value="tRNA dimethylallyltransferase"/>
    <property type="match status" value="1"/>
</dbReference>
<dbReference type="Gene3D" id="1.10.20.140">
    <property type="match status" value="1"/>
</dbReference>
<dbReference type="Gene3D" id="1.10.287.890">
    <property type="entry name" value="Crystal structure of tRNA isopentenylpyrophosphate transferase (bh2366) domain"/>
    <property type="match status" value="1"/>
</dbReference>
<dbReference type="Gene3D" id="3.40.50.300">
    <property type="entry name" value="P-loop containing nucleotide triphosphate hydrolases"/>
    <property type="match status" value="1"/>
</dbReference>
<dbReference type="HAMAP" id="MF_00185">
    <property type="entry name" value="IPP_trans"/>
    <property type="match status" value="1"/>
</dbReference>
<dbReference type="InterPro" id="IPR039657">
    <property type="entry name" value="Dimethylallyltransferase"/>
</dbReference>
<dbReference type="InterPro" id="IPR018022">
    <property type="entry name" value="IPT"/>
</dbReference>
<dbReference type="InterPro" id="IPR027417">
    <property type="entry name" value="P-loop_NTPase"/>
</dbReference>
<dbReference type="NCBIfam" id="TIGR00174">
    <property type="entry name" value="miaA"/>
    <property type="match status" value="1"/>
</dbReference>
<dbReference type="PANTHER" id="PTHR11088">
    <property type="entry name" value="TRNA DIMETHYLALLYLTRANSFERASE"/>
    <property type="match status" value="1"/>
</dbReference>
<dbReference type="PANTHER" id="PTHR11088:SF60">
    <property type="entry name" value="TRNA DIMETHYLALLYLTRANSFERASE"/>
    <property type="match status" value="1"/>
</dbReference>
<dbReference type="Pfam" id="PF01715">
    <property type="entry name" value="IPPT"/>
    <property type="match status" value="1"/>
</dbReference>
<dbReference type="SUPFAM" id="SSF52540">
    <property type="entry name" value="P-loop containing nucleoside triphosphate hydrolases"/>
    <property type="match status" value="1"/>
</dbReference>
<protein>
    <recommendedName>
        <fullName evidence="1">tRNA dimethylallyltransferase</fullName>
        <ecNumber evidence="1">2.5.1.75</ecNumber>
    </recommendedName>
    <alternativeName>
        <fullName evidence="1">Dimethylallyl diphosphate:tRNA dimethylallyltransferase</fullName>
        <shortName evidence="1">DMAPP:tRNA dimethylallyltransferase</shortName>
        <shortName evidence="1">DMATase</shortName>
    </alternativeName>
    <alternativeName>
        <fullName evidence="1">Isopentenyl-diphosphate:tRNA isopentenyltransferase</fullName>
        <shortName evidence="1">IPP transferase</shortName>
        <shortName evidence="1">IPPT</shortName>
        <shortName evidence="1">IPTase</shortName>
    </alternativeName>
</protein>
<evidence type="ECO:0000255" key="1">
    <source>
        <dbReference type="HAMAP-Rule" id="MF_00185"/>
    </source>
</evidence>
<comment type="function">
    <text evidence="1">Catalyzes the transfer of a dimethylallyl group onto the adenine at position 37 in tRNAs that read codons beginning with uridine, leading to the formation of N6-(dimethylallyl)adenosine (i(6)A).</text>
</comment>
<comment type="catalytic activity">
    <reaction evidence="1">
        <text>adenosine(37) in tRNA + dimethylallyl diphosphate = N(6)-dimethylallyladenosine(37) in tRNA + diphosphate</text>
        <dbReference type="Rhea" id="RHEA:26482"/>
        <dbReference type="Rhea" id="RHEA-COMP:10162"/>
        <dbReference type="Rhea" id="RHEA-COMP:10375"/>
        <dbReference type="ChEBI" id="CHEBI:33019"/>
        <dbReference type="ChEBI" id="CHEBI:57623"/>
        <dbReference type="ChEBI" id="CHEBI:74411"/>
        <dbReference type="ChEBI" id="CHEBI:74415"/>
        <dbReference type="EC" id="2.5.1.75"/>
    </reaction>
</comment>
<comment type="cofactor">
    <cofactor evidence="1">
        <name>Mg(2+)</name>
        <dbReference type="ChEBI" id="CHEBI:18420"/>
    </cofactor>
</comment>
<comment type="subunit">
    <text evidence="1">Monomer.</text>
</comment>
<comment type="similarity">
    <text evidence="1">Belongs to the IPP transferase family.</text>
</comment>
<accession>B1LQJ1</accession>
<keyword id="KW-0067">ATP-binding</keyword>
<keyword id="KW-0460">Magnesium</keyword>
<keyword id="KW-0547">Nucleotide-binding</keyword>
<keyword id="KW-0808">Transferase</keyword>
<keyword id="KW-0819">tRNA processing</keyword>
<gene>
    <name evidence="1" type="primary">miaA</name>
    <name type="ordered locus">EcSMS35_4642</name>
</gene>
<reference key="1">
    <citation type="journal article" date="2008" name="J. Bacteriol.">
        <title>Insights into the environmental resistance gene pool from the genome sequence of the multidrug-resistant environmental isolate Escherichia coli SMS-3-5.</title>
        <authorList>
            <person name="Fricke W.F."/>
            <person name="Wright M.S."/>
            <person name="Lindell A.H."/>
            <person name="Harkins D.M."/>
            <person name="Baker-Austin C."/>
            <person name="Ravel J."/>
            <person name="Stepanauskas R."/>
        </authorList>
    </citation>
    <scope>NUCLEOTIDE SEQUENCE [LARGE SCALE GENOMIC DNA]</scope>
    <source>
        <strain>SMS-3-5 / SECEC</strain>
    </source>
</reference>
<organism>
    <name type="scientific">Escherichia coli (strain SMS-3-5 / SECEC)</name>
    <dbReference type="NCBI Taxonomy" id="439855"/>
    <lineage>
        <taxon>Bacteria</taxon>
        <taxon>Pseudomonadati</taxon>
        <taxon>Pseudomonadota</taxon>
        <taxon>Gammaproteobacteria</taxon>
        <taxon>Enterobacterales</taxon>
        <taxon>Enterobacteriaceae</taxon>
        <taxon>Escherichia</taxon>
    </lineage>
</organism>
<proteinExistence type="inferred from homology"/>